<comment type="subcellular location">
    <subcellularLocation>
        <location evidence="1">Secreted</location>
    </subcellularLocation>
</comment>
<comment type="similarity">
    <text evidence="3">Belongs to the DEFL family.</text>
</comment>
<feature type="signal peptide" evidence="2">
    <location>
        <begin position="1"/>
        <end position="27"/>
    </location>
</feature>
<feature type="chain" id="PRO_0000017285" description="Putative defensin-like protein 83">
    <location>
        <begin position="28"/>
        <end position="91"/>
    </location>
</feature>
<feature type="disulfide bond" evidence="1">
    <location>
        <begin position="32"/>
        <end position="71"/>
    </location>
</feature>
<feature type="disulfide bond" evidence="1">
    <location>
        <begin position="37"/>
        <end position="57"/>
    </location>
</feature>
<feature type="disulfide bond" evidence="1">
    <location>
        <begin position="43"/>
        <end position="69"/>
    </location>
</feature>
<feature type="disulfide bond" evidence="1">
    <location>
        <begin position="47"/>
        <end position="70"/>
    </location>
</feature>
<keyword id="KW-0929">Antimicrobial</keyword>
<keyword id="KW-1015">Disulfide bond</keyword>
<keyword id="KW-0295">Fungicide</keyword>
<keyword id="KW-0611">Plant defense</keyword>
<keyword id="KW-1185">Reference proteome</keyword>
<keyword id="KW-0964">Secreted</keyword>
<keyword id="KW-0732">Signal</keyword>
<organism evidence="3">
    <name type="scientific">Arabidopsis thaliana</name>
    <name type="common">Mouse-ear cress</name>
    <dbReference type="NCBI Taxonomy" id="3702"/>
    <lineage>
        <taxon>Eukaryota</taxon>
        <taxon>Viridiplantae</taxon>
        <taxon>Streptophyta</taxon>
        <taxon>Embryophyta</taxon>
        <taxon>Tracheophyta</taxon>
        <taxon>Spermatophyta</taxon>
        <taxon>Magnoliopsida</taxon>
        <taxon>eudicotyledons</taxon>
        <taxon>Gunneridae</taxon>
        <taxon>Pentapetalae</taxon>
        <taxon>rosids</taxon>
        <taxon>malvids</taxon>
        <taxon>Brassicales</taxon>
        <taxon>Brassicaceae</taxon>
        <taxon>Camelineae</taxon>
        <taxon>Arabidopsis</taxon>
    </lineage>
</organism>
<evidence type="ECO:0000250" key="1"/>
<evidence type="ECO:0000255" key="2"/>
<evidence type="ECO:0000305" key="3"/>
<sequence length="91" mass="9503">MATNKFLSILLLSLMAFAAILLPMISGQIITCLPGECTNPSECNAACKSNGYKGGACVSMSIGSTTGACCCKPNFKSQDSFKSNDIIINNN</sequence>
<dbReference type="EMBL" id="AB017061">
    <property type="status" value="NOT_ANNOTATED_CDS"/>
    <property type="molecule type" value="Genomic_DNA"/>
</dbReference>
<dbReference type="EMBL" id="CP002688">
    <property type="protein sequence ID" value="AED95746.1"/>
    <property type="molecule type" value="Genomic_DNA"/>
</dbReference>
<dbReference type="RefSeq" id="NP_001032039.1">
    <property type="nucleotide sequence ID" value="NM_001036962.2"/>
</dbReference>
<dbReference type="BioGRID" id="531831">
    <property type="interactions" value="1"/>
</dbReference>
<dbReference type="PaxDb" id="3702-AT5G48945.1"/>
<dbReference type="EnsemblPlants" id="AT5G48945.1">
    <property type="protein sequence ID" value="AT5G48945.1"/>
    <property type="gene ID" value="AT5G48945"/>
</dbReference>
<dbReference type="GeneID" id="3771470"/>
<dbReference type="Gramene" id="AT5G48945.1">
    <property type="protein sequence ID" value="AT5G48945.1"/>
    <property type="gene ID" value="AT5G48945"/>
</dbReference>
<dbReference type="KEGG" id="ath:AT5G48945"/>
<dbReference type="Araport" id="AT5G48945"/>
<dbReference type="TAIR" id="AT5G48945">
    <property type="gene designation" value="LCR46"/>
</dbReference>
<dbReference type="HOGENOM" id="CLU_180308_0_0_1"/>
<dbReference type="InParanoid" id="P82761"/>
<dbReference type="OMA" id="GACCCKP"/>
<dbReference type="PhylomeDB" id="P82761"/>
<dbReference type="PRO" id="PR:P82761"/>
<dbReference type="Proteomes" id="UP000006548">
    <property type="component" value="Chromosome 5"/>
</dbReference>
<dbReference type="ExpressionAtlas" id="P82761">
    <property type="expression patterns" value="baseline"/>
</dbReference>
<dbReference type="GO" id="GO:0005576">
    <property type="term" value="C:extracellular region"/>
    <property type="evidence" value="ECO:0007669"/>
    <property type="project" value="UniProtKB-SubCell"/>
</dbReference>
<dbReference type="GO" id="GO:0050832">
    <property type="term" value="P:defense response to fungus"/>
    <property type="evidence" value="ECO:0007669"/>
    <property type="project" value="UniProtKB-KW"/>
</dbReference>
<dbReference type="GO" id="GO:0031640">
    <property type="term" value="P:killing of cells of another organism"/>
    <property type="evidence" value="ECO:0007669"/>
    <property type="project" value="UniProtKB-KW"/>
</dbReference>
<name>DEF83_ARATH</name>
<proteinExistence type="inferred from homology"/>
<gene>
    <name type="primary">LCR46</name>
    <name type="ordered locus">At5g48945</name>
    <name type="ORF">K19E20</name>
</gene>
<protein>
    <recommendedName>
        <fullName>Putative defensin-like protein 83</fullName>
    </recommendedName>
    <alternativeName>
        <fullName>Putative low-molecular-weight cysteine-rich protein 46</fullName>
        <shortName>Protein LCR46</shortName>
    </alternativeName>
</protein>
<reference evidence="3" key="1">
    <citation type="journal article" date="1999" name="DNA Res.">
        <title>Structural analysis of Arabidopsis thaliana chromosome 5. IX. Sequence features of the regions of 1,011,550 bp covered by seventeen P1 and TAC clones.</title>
        <authorList>
            <person name="Kaneko T."/>
            <person name="Katoh T."/>
            <person name="Sato S."/>
            <person name="Nakamura Y."/>
            <person name="Asamizu E."/>
            <person name="Kotani H."/>
            <person name="Miyajima N."/>
            <person name="Tabata S."/>
        </authorList>
    </citation>
    <scope>NUCLEOTIDE SEQUENCE [LARGE SCALE GENOMIC DNA]</scope>
    <source>
        <strain>cv. Columbia</strain>
    </source>
</reference>
<reference key="2">
    <citation type="journal article" date="2017" name="Plant J.">
        <title>Araport11: a complete reannotation of the Arabidopsis thaliana reference genome.</title>
        <authorList>
            <person name="Cheng C.Y."/>
            <person name="Krishnakumar V."/>
            <person name="Chan A.P."/>
            <person name="Thibaud-Nissen F."/>
            <person name="Schobel S."/>
            <person name="Town C.D."/>
        </authorList>
    </citation>
    <scope>GENOME REANNOTATION</scope>
    <source>
        <strain>cv. Columbia</strain>
    </source>
</reference>
<reference evidence="3" key="3">
    <citation type="journal article" date="2001" name="Plant Mol. Biol.">
        <title>Two large Arabidopsis thaliana gene families are homologous to the Brassica gene superfamily that encodes pollen coat proteins and the male component of the self-incompatibility response.</title>
        <authorList>
            <person name="Vanoosthuyse V."/>
            <person name="Miege C."/>
            <person name="Dumas C."/>
            <person name="Cock J.M."/>
        </authorList>
    </citation>
    <scope>IDENTIFICATION</scope>
</reference>
<reference key="4">
    <citation type="journal article" date="2005" name="Plant Physiol.">
        <title>Genome organization of more than 300 defensin-like genes in Arabidopsis.</title>
        <authorList>
            <person name="Silverstein K.A.T."/>
            <person name="Graham M.A."/>
            <person name="Paape T.D."/>
            <person name="VandenBosch K.A."/>
        </authorList>
    </citation>
    <scope>GENE FAMILY</scope>
</reference>
<accession>P82761</accession>